<feature type="propeptide" id="PRO_0000459901" evidence="1">
    <location>
        <begin position="1"/>
        <end position="12"/>
    </location>
</feature>
<feature type="chain" id="PRO_0000181103" description="Large ribosomal subunit protein bL27">
    <location>
        <begin position="13"/>
        <end position="99"/>
    </location>
</feature>
<feature type="region of interest" description="Disordered" evidence="3">
    <location>
        <begin position="15"/>
        <end position="36"/>
    </location>
</feature>
<proteinExistence type="inferred from homology"/>
<comment type="PTM">
    <text evidence="1">The N-terminus is cleaved by ribosomal processing cysteine protease Prp.</text>
</comment>
<comment type="similarity">
    <text evidence="2">Belongs to the bacterial ribosomal protein bL27 family.</text>
</comment>
<organism>
    <name type="scientific">Lactobacillus johnsonii (strain CNCM I-12250 / La1 / NCC 533)</name>
    <dbReference type="NCBI Taxonomy" id="257314"/>
    <lineage>
        <taxon>Bacteria</taxon>
        <taxon>Bacillati</taxon>
        <taxon>Bacillota</taxon>
        <taxon>Bacilli</taxon>
        <taxon>Lactobacillales</taxon>
        <taxon>Lactobacillaceae</taxon>
        <taxon>Lactobacillus</taxon>
    </lineage>
</organism>
<dbReference type="EMBL" id="AE017198">
    <property type="protein sequence ID" value="AAS09323.1"/>
    <property type="molecule type" value="Genomic_DNA"/>
</dbReference>
<dbReference type="RefSeq" id="WP_003647542.1">
    <property type="nucleotide sequence ID" value="NC_005362.1"/>
</dbReference>
<dbReference type="SMR" id="Q74IL5"/>
<dbReference type="GeneID" id="83570118"/>
<dbReference type="KEGG" id="ljo:LJ_1555"/>
<dbReference type="eggNOG" id="COG0211">
    <property type="taxonomic scope" value="Bacteria"/>
</dbReference>
<dbReference type="HOGENOM" id="CLU_095424_4_0_9"/>
<dbReference type="Proteomes" id="UP000000581">
    <property type="component" value="Chromosome"/>
</dbReference>
<dbReference type="GO" id="GO:0022625">
    <property type="term" value="C:cytosolic large ribosomal subunit"/>
    <property type="evidence" value="ECO:0007669"/>
    <property type="project" value="TreeGrafter"/>
</dbReference>
<dbReference type="GO" id="GO:0003735">
    <property type="term" value="F:structural constituent of ribosome"/>
    <property type="evidence" value="ECO:0007669"/>
    <property type="project" value="InterPro"/>
</dbReference>
<dbReference type="GO" id="GO:0006412">
    <property type="term" value="P:translation"/>
    <property type="evidence" value="ECO:0007669"/>
    <property type="project" value="UniProtKB-UniRule"/>
</dbReference>
<dbReference type="FunFam" id="2.40.50.100:FF:000004">
    <property type="entry name" value="50S ribosomal protein L27"/>
    <property type="match status" value="1"/>
</dbReference>
<dbReference type="Gene3D" id="2.40.50.100">
    <property type="match status" value="1"/>
</dbReference>
<dbReference type="HAMAP" id="MF_00539">
    <property type="entry name" value="Ribosomal_bL27"/>
    <property type="match status" value="1"/>
</dbReference>
<dbReference type="InterPro" id="IPR001684">
    <property type="entry name" value="Ribosomal_bL27"/>
</dbReference>
<dbReference type="InterPro" id="IPR018261">
    <property type="entry name" value="Ribosomal_bL27_CS"/>
</dbReference>
<dbReference type="NCBIfam" id="TIGR00062">
    <property type="entry name" value="L27"/>
    <property type="match status" value="1"/>
</dbReference>
<dbReference type="PANTHER" id="PTHR15893:SF0">
    <property type="entry name" value="LARGE RIBOSOMAL SUBUNIT PROTEIN BL27M"/>
    <property type="match status" value="1"/>
</dbReference>
<dbReference type="PANTHER" id="PTHR15893">
    <property type="entry name" value="RIBOSOMAL PROTEIN L27"/>
    <property type="match status" value="1"/>
</dbReference>
<dbReference type="Pfam" id="PF01016">
    <property type="entry name" value="Ribosomal_L27"/>
    <property type="match status" value="1"/>
</dbReference>
<dbReference type="PRINTS" id="PR00063">
    <property type="entry name" value="RIBOSOMALL27"/>
</dbReference>
<dbReference type="SUPFAM" id="SSF110324">
    <property type="entry name" value="Ribosomal L27 protein-like"/>
    <property type="match status" value="1"/>
</dbReference>
<dbReference type="PROSITE" id="PS00831">
    <property type="entry name" value="RIBOSOMAL_L27"/>
    <property type="match status" value="1"/>
</dbReference>
<accession>Q74IL5</accession>
<name>RL27_LACJO</name>
<keyword id="KW-0687">Ribonucleoprotein</keyword>
<keyword id="KW-0689">Ribosomal protein</keyword>
<sequence length="99" mass="10644">MMINNLEALKLFAHHKGGGSTANGRNSAGRRLGAKRADGQKINAGSIIFRQRGTKIHPGKNVGIGGDDTLFALTSGVVKFERLGRDRKQVSVYPVEEAK</sequence>
<reference key="1">
    <citation type="journal article" date="2004" name="Proc. Natl. Acad. Sci. U.S.A.">
        <title>The genome sequence of the probiotic intestinal bacterium Lactobacillus johnsonii NCC 533.</title>
        <authorList>
            <person name="Pridmore R.D."/>
            <person name="Berger B."/>
            <person name="Desiere F."/>
            <person name="Vilanova D."/>
            <person name="Barretto C."/>
            <person name="Pittet A.-C."/>
            <person name="Zwahlen M.-C."/>
            <person name="Rouvet M."/>
            <person name="Altermann E."/>
            <person name="Barrangou R."/>
            <person name="Mollet B."/>
            <person name="Mercenier A."/>
            <person name="Klaenhammer T."/>
            <person name="Arigoni F."/>
            <person name="Schell M.A."/>
        </authorList>
    </citation>
    <scope>NUCLEOTIDE SEQUENCE [LARGE SCALE GENOMIC DNA]</scope>
    <source>
        <strain>CNCM I-1225 / La1 / NCC 533</strain>
    </source>
</reference>
<protein>
    <recommendedName>
        <fullName evidence="2">Large ribosomal subunit protein bL27</fullName>
    </recommendedName>
    <alternativeName>
        <fullName evidence="4">50S ribosomal protein L27</fullName>
    </alternativeName>
</protein>
<gene>
    <name evidence="2" type="primary">rpmA</name>
    <name type="ordered locus">LJ_1555</name>
</gene>
<evidence type="ECO:0000250" key="1">
    <source>
        <dbReference type="UniProtKB" id="Q2FXT0"/>
    </source>
</evidence>
<evidence type="ECO:0000255" key="2">
    <source>
        <dbReference type="HAMAP-Rule" id="MF_00539"/>
    </source>
</evidence>
<evidence type="ECO:0000256" key="3">
    <source>
        <dbReference type="SAM" id="MobiDB-lite"/>
    </source>
</evidence>
<evidence type="ECO:0000305" key="4"/>